<accession>Q7NQG6</accession>
<gene>
    <name evidence="1" type="primary">rpsH</name>
    <name type="ordered locus">CV_4172</name>
</gene>
<proteinExistence type="inferred from homology"/>
<dbReference type="EMBL" id="AE016825">
    <property type="protein sequence ID" value="AAQ61832.1"/>
    <property type="molecule type" value="Genomic_DNA"/>
</dbReference>
<dbReference type="RefSeq" id="WP_011137719.1">
    <property type="nucleotide sequence ID" value="NC_005085.1"/>
</dbReference>
<dbReference type="SMR" id="Q7NQG6"/>
<dbReference type="STRING" id="243365.CV_4172"/>
<dbReference type="GeneID" id="66366356"/>
<dbReference type="KEGG" id="cvi:CV_4172"/>
<dbReference type="eggNOG" id="COG0096">
    <property type="taxonomic scope" value="Bacteria"/>
</dbReference>
<dbReference type="HOGENOM" id="CLU_098428_0_0_4"/>
<dbReference type="OrthoDB" id="9802617at2"/>
<dbReference type="Proteomes" id="UP000001424">
    <property type="component" value="Chromosome"/>
</dbReference>
<dbReference type="GO" id="GO:1990904">
    <property type="term" value="C:ribonucleoprotein complex"/>
    <property type="evidence" value="ECO:0007669"/>
    <property type="project" value="UniProtKB-KW"/>
</dbReference>
<dbReference type="GO" id="GO:0005840">
    <property type="term" value="C:ribosome"/>
    <property type="evidence" value="ECO:0007669"/>
    <property type="project" value="UniProtKB-KW"/>
</dbReference>
<dbReference type="GO" id="GO:0019843">
    <property type="term" value="F:rRNA binding"/>
    <property type="evidence" value="ECO:0007669"/>
    <property type="project" value="UniProtKB-UniRule"/>
</dbReference>
<dbReference type="GO" id="GO:0003735">
    <property type="term" value="F:structural constituent of ribosome"/>
    <property type="evidence" value="ECO:0007669"/>
    <property type="project" value="InterPro"/>
</dbReference>
<dbReference type="GO" id="GO:0006412">
    <property type="term" value="P:translation"/>
    <property type="evidence" value="ECO:0007669"/>
    <property type="project" value="UniProtKB-UniRule"/>
</dbReference>
<dbReference type="FunFam" id="3.30.1370.30:FF:000003">
    <property type="entry name" value="30S ribosomal protein S8"/>
    <property type="match status" value="1"/>
</dbReference>
<dbReference type="FunFam" id="3.30.1490.10:FF:000001">
    <property type="entry name" value="30S ribosomal protein S8"/>
    <property type="match status" value="1"/>
</dbReference>
<dbReference type="Gene3D" id="3.30.1370.30">
    <property type="match status" value="1"/>
</dbReference>
<dbReference type="Gene3D" id="3.30.1490.10">
    <property type="match status" value="1"/>
</dbReference>
<dbReference type="HAMAP" id="MF_01302_B">
    <property type="entry name" value="Ribosomal_uS8_B"/>
    <property type="match status" value="1"/>
</dbReference>
<dbReference type="InterPro" id="IPR000630">
    <property type="entry name" value="Ribosomal_uS8"/>
</dbReference>
<dbReference type="InterPro" id="IPR047863">
    <property type="entry name" value="Ribosomal_uS8_CS"/>
</dbReference>
<dbReference type="InterPro" id="IPR035987">
    <property type="entry name" value="Ribosomal_uS8_sf"/>
</dbReference>
<dbReference type="NCBIfam" id="NF001109">
    <property type="entry name" value="PRK00136.1"/>
    <property type="match status" value="1"/>
</dbReference>
<dbReference type="PANTHER" id="PTHR11758">
    <property type="entry name" value="40S RIBOSOMAL PROTEIN S15A"/>
    <property type="match status" value="1"/>
</dbReference>
<dbReference type="Pfam" id="PF00410">
    <property type="entry name" value="Ribosomal_S8"/>
    <property type="match status" value="1"/>
</dbReference>
<dbReference type="SUPFAM" id="SSF56047">
    <property type="entry name" value="Ribosomal protein S8"/>
    <property type="match status" value="1"/>
</dbReference>
<dbReference type="PROSITE" id="PS00053">
    <property type="entry name" value="RIBOSOMAL_S8"/>
    <property type="match status" value="1"/>
</dbReference>
<reference key="1">
    <citation type="journal article" date="2003" name="Proc. Natl. Acad. Sci. U.S.A.">
        <title>The complete genome sequence of Chromobacterium violaceum reveals remarkable and exploitable bacterial adaptability.</title>
        <authorList>
            <person name="Vasconcelos A.T.R."/>
            <person name="de Almeida D.F."/>
            <person name="Hungria M."/>
            <person name="Guimaraes C.T."/>
            <person name="Antonio R.V."/>
            <person name="Almeida F.C."/>
            <person name="de Almeida L.G.P."/>
            <person name="de Almeida R."/>
            <person name="Alves-Gomes J.A."/>
            <person name="Andrade E.M."/>
            <person name="Araripe J."/>
            <person name="de Araujo M.F.F."/>
            <person name="Astolfi-Filho S."/>
            <person name="Azevedo V."/>
            <person name="Baptista A.J."/>
            <person name="Bataus L.A.M."/>
            <person name="Batista J.S."/>
            <person name="Belo A."/>
            <person name="van den Berg C."/>
            <person name="Bogo M."/>
            <person name="Bonatto S."/>
            <person name="Bordignon J."/>
            <person name="Brigido M.M."/>
            <person name="Brito C.A."/>
            <person name="Brocchi M."/>
            <person name="Burity H.A."/>
            <person name="Camargo A.A."/>
            <person name="Cardoso D.D.P."/>
            <person name="Carneiro N.P."/>
            <person name="Carraro D.M."/>
            <person name="Carvalho C.M.B."/>
            <person name="Cascardo J.C.M."/>
            <person name="Cavada B.S."/>
            <person name="Chueire L.M.O."/>
            <person name="Creczynski-Pasa T.B."/>
            <person name="Cunha-Junior N.C."/>
            <person name="Fagundes N."/>
            <person name="Falcao C.L."/>
            <person name="Fantinatti F."/>
            <person name="Farias I.P."/>
            <person name="Felipe M.S.S."/>
            <person name="Ferrari L.P."/>
            <person name="Ferro J.A."/>
            <person name="Ferro M.I.T."/>
            <person name="Franco G.R."/>
            <person name="Freitas N.S.A."/>
            <person name="Furlan L.R."/>
            <person name="Gazzinelli R.T."/>
            <person name="Gomes E.A."/>
            <person name="Goncalves P.R."/>
            <person name="Grangeiro T.B."/>
            <person name="Grattapaglia D."/>
            <person name="Grisard E.C."/>
            <person name="Hanna E.S."/>
            <person name="Jardim S.N."/>
            <person name="Laurino J."/>
            <person name="Leoi L.C.T."/>
            <person name="Lima L.F.A."/>
            <person name="Loureiro M.F."/>
            <person name="Lyra M.C.C.P."/>
            <person name="Madeira H.M.F."/>
            <person name="Manfio G.P."/>
            <person name="Maranhao A.Q."/>
            <person name="Martins W.S."/>
            <person name="di Mauro S.M.Z."/>
            <person name="de Medeiros S.R.B."/>
            <person name="Meissner R.V."/>
            <person name="Moreira M.A.M."/>
            <person name="Nascimento F.F."/>
            <person name="Nicolas M.F."/>
            <person name="Oliveira J.G."/>
            <person name="Oliveira S.C."/>
            <person name="Paixao R.F.C."/>
            <person name="Parente J.A."/>
            <person name="Pedrosa F.O."/>
            <person name="Pena S.D.J."/>
            <person name="Pereira J.O."/>
            <person name="Pereira M."/>
            <person name="Pinto L.S.R.C."/>
            <person name="Pinto L.S."/>
            <person name="Porto J.I.R."/>
            <person name="Potrich D.P."/>
            <person name="Ramalho-Neto C.E."/>
            <person name="Reis A.M.M."/>
            <person name="Rigo L.U."/>
            <person name="Rondinelli E."/>
            <person name="Santos E.B.P."/>
            <person name="Santos F.R."/>
            <person name="Schneider M.P.C."/>
            <person name="Seuanez H.N."/>
            <person name="Silva A.M.R."/>
            <person name="da Silva A.L.C."/>
            <person name="Silva D.W."/>
            <person name="Silva R."/>
            <person name="Simoes I.C."/>
            <person name="Simon D."/>
            <person name="Soares C.M.A."/>
            <person name="Soares R.B.A."/>
            <person name="Souza E.M."/>
            <person name="Souza K.R.L."/>
            <person name="Souza R.C."/>
            <person name="Steffens M.B.R."/>
            <person name="Steindel M."/>
            <person name="Teixeira S.R."/>
            <person name="Urmenyi T."/>
            <person name="Vettore A."/>
            <person name="Wassem R."/>
            <person name="Zaha A."/>
            <person name="Simpson A.J.G."/>
        </authorList>
    </citation>
    <scope>NUCLEOTIDE SEQUENCE [LARGE SCALE GENOMIC DNA]</scope>
    <source>
        <strain>ATCC 12472 / DSM 30191 / JCM 1249 / CCUG 213 / NBRC 12614 / NCIMB 9131 / NCTC 9757 / MK</strain>
    </source>
</reference>
<keyword id="KW-1185">Reference proteome</keyword>
<keyword id="KW-0687">Ribonucleoprotein</keyword>
<keyword id="KW-0689">Ribosomal protein</keyword>
<keyword id="KW-0694">RNA-binding</keyword>
<keyword id="KW-0699">rRNA-binding</keyword>
<organism>
    <name type="scientific">Chromobacterium violaceum (strain ATCC 12472 / DSM 30191 / JCM 1249 / CCUG 213 / NBRC 12614 / NCIMB 9131 / NCTC 9757 / MK)</name>
    <dbReference type="NCBI Taxonomy" id="243365"/>
    <lineage>
        <taxon>Bacteria</taxon>
        <taxon>Pseudomonadati</taxon>
        <taxon>Pseudomonadota</taxon>
        <taxon>Betaproteobacteria</taxon>
        <taxon>Neisseriales</taxon>
        <taxon>Chromobacteriaceae</taxon>
        <taxon>Chromobacterium</taxon>
    </lineage>
</organism>
<feature type="chain" id="PRO_0000126395" description="Small ribosomal subunit protein uS8">
    <location>
        <begin position="1"/>
        <end position="131"/>
    </location>
</feature>
<evidence type="ECO:0000255" key="1">
    <source>
        <dbReference type="HAMAP-Rule" id="MF_01302"/>
    </source>
</evidence>
<evidence type="ECO:0000305" key="2"/>
<sequence length="131" mass="14280">MSMHDPISDMLTRIRNGQHASKVKVSMPSSKLKIALAQVLKEEGYIEDFAIAGEEKKPVLDIQLKYYAGRPVIERIERVSRPGLRVYKGSTEIPKVMNGLGVAILSTSKGVMTDRKARAAGIGGELLCVVA</sequence>
<comment type="function">
    <text evidence="1">One of the primary rRNA binding proteins, it binds directly to 16S rRNA central domain where it helps coordinate assembly of the platform of the 30S subunit.</text>
</comment>
<comment type="subunit">
    <text evidence="1">Part of the 30S ribosomal subunit. Contacts proteins S5 and S12.</text>
</comment>
<comment type="similarity">
    <text evidence="1">Belongs to the universal ribosomal protein uS8 family.</text>
</comment>
<name>RS8_CHRVO</name>
<protein>
    <recommendedName>
        <fullName evidence="1">Small ribosomal subunit protein uS8</fullName>
    </recommendedName>
    <alternativeName>
        <fullName evidence="2">30S ribosomal protein S8</fullName>
    </alternativeName>
</protein>